<organism>
    <name type="scientific">Campylobacter jejuni subsp. jejuni serotype O:23/36 (strain 81-176)</name>
    <dbReference type="NCBI Taxonomy" id="354242"/>
    <lineage>
        <taxon>Bacteria</taxon>
        <taxon>Pseudomonadati</taxon>
        <taxon>Campylobacterota</taxon>
        <taxon>Epsilonproteobacteria</taxon>
        <taxon>Campylobacterales</taxon>
        <taxon>Campylobacteraceae</taxon>
        <taxon>Campylobacter</taxon>
    </lineage>
</organism>
<comment type="function">
    <text evidence="1">Catalyzes the hydrolysis of UDP-3-O-myristoyl-N-acetylglucosamine to form UDP-3-O-myristoylglucosamine and acetate, the committed step in lipid A biosynthesis.</text>
</comment>
<comment type="catalytic activity">
    <reaction evidence="1">
        <text>a UDP-3-O-[(3R)-3-hydroxyacyl]-N-acetyl-alpha-D-glucosamine + H2O = a UDP-3-O-[(3R)-3-hydroxyacyl]-alpha-D-glucosamine + acetate</text>
        <dbReference type="Rhea" id="RHEA:67816"/>
        <dbReference type="ChEBI" id="CHEBI:15377"/>
        <dbReference type="ChEBI" id="CHEBI:30089"/>
        <dbReference type="ChEBI" id="CHEBI:137740"/>
        <dbReference type="ChEBI" id="CHEBI:173225"/>
        <dbReference type="EC" id="3.5.1.108"/>
    </reaction>
</comment>
<comment type="cofactor">
    <cofactor evidence="1">
        <name>Zn(2+)</name>
        <dbReference type="ChEBI" id="CHEBI:29105"/>
    </cofactor>
</comment>
<comment type="pathway">
    <text evidence="1">Glycolipid biosynthesis; lipid IV(A) biosynthesis; lipid IV(A) from (3R)-3-hydroxytetradecanoyl-[acyl-carrier-protein] and UDP-N-acetyl-alpha-D-glucosamine: step 2/6.</text>
</comment>
<comment type="similarity">
    <text evidence="1">Belongs to the LpxC family.</text>
</comment>
<gene>
    <name evidence="1" type="primary">lpxC</name>
    <name type="ordered locus">CJJ81176_0167</name>
</gene>
<accession>A1VXL5</accession>
<name>LPXC_CAMJJ</name>
<dbReference type="EC" id="3.5.1.108" evidence="1"/>
<dbReference type="EMBL" id="CP000538">
    <property type="protein sequence ID" value="EAQ73166.1"/>
    <property type="molecule type" value="Genomic_DNA"/>
</dbReference>
<dbReference type="RefSeq" id="WP_009881794.1">
    <property type="nucleotide sequence ID" value="NC_008787.1"/>
</dbReference>
<dbReference type="SMR" id="A1VXL5"/>
<dbReference type="KEGG" id="cjj:CJJ81176_0167"/>
<dbReference type="eggNOG" id="COG0774">
    <property type="taxonomic scope" value="Bacteria"/>
</dbReference>
<dbReference type="HOGENOM" id="CLU_046528_1_0_7"/>
<dbReference type="UniPathway" id="UPA00359">
    <property type="reaction ID" value="UER00478"/>
</dbReference>
<dbReference type="Proteomes" id="UP000000646">
    <property type="component" value="Chromosome"/>
</dbReference>
<dbReference type="GO" id="GO:0016020">
    <property type="term" value="C:membrane"/>
    <property type="evidence" value="ECO:0007669"/>
    <property type="project" value="GOC"/>
</dbReference>
<dbReference type="GO" id="GO:0046872">
    <property type="term" value="F:metal ion binding"/>
    <property type="evidence" value="ECO:0007669"/>
    <property type="project" value="UniProtKB-KW"/>
</dbReference>
<dbReference type="GO" id="GO:0103117">
    <property type="term" value="F:UDP-3-O-acyl-N-acetylglucosamine deacetylase activity"/>
    <property type="evidence" value="ECO:0007669"/>
    <property type="project" value="UniProtKB-UniRule"/>
</dbReference>
<dbReference type="GO" id="GO:0009245">
    <property type="term" value="P:lipid A biosynthetic process"/>
    <property type="evidence" value="ECO:0007669"/>
    <property type="project" value="UniProtKB-UniRule"/>
</dbReference>
<dbReference type="Gene3D" id="3.30.230.20">
    <property type="entry name" value="lpxc deacetylase, domain 1"/>
    <property type="match status" value="1"/>
</dbReference>
<dbReference type="Gene3D" id="3.30.1700.10">
    <property type="entry name" value="lpxc deacetylase, domain 2"/>
    <property type="match status" value="1"/>
</dbReference>
<dbReference type="HAMAP" id="MF_00388">
    <property type="entry name" value="LpxC"/>
    <property type="match status" value="1"/>
</dbReference>
<dbReference type="InterPro" id="IPR020568">
    <property type="entry name" value="Ribosomal_Su5_D2-typ_SF"/>
</dbReference>
<dbReference type="InterPro" id="IPR004463">
    <property type="entry name" value="UDP-acyl_GlcNac_deAcase"/>
</dbReference>
<dbReference type="InterPro" id="IPR011334">
    <property type="entry name" value="UDP-acyl_GlcNac_deAcase_C"/>
</dbReference>
<dbReference type="InterPro" id="IPR015870">
    <property type="entry name" value="UDP-acyl_N-AcGlcN_deAcase_N"/>
</dbReference>
<dbReference type="NCBIfam" id="TIGR00325">
    <property type="entry name" value="lpxC"/>
    <property type="match status" value="1"/>
</dbReference>
<dbReference type="PANTHER" id="PTHR33694">
    <property type="entry name" value="UDP-3-O-ACYL-N-ACETYLGLUCOSAMINE DEACETYLASE 1, MITOCHONDRIAL-RELATED"/>
    <property type="match status" value="1"/>
</dbReference>
<dbReference type="PANTHER" id="PTHR33694:SF1">
    <property type="entry name" value="UDP-3-O-ACYL-N-ACETYLGLUCOSAMINE DEACETYLASE 1, MITOCHONDRIAL-RELATED"/>
    <property type="match status" value="1"/>
</dbReference>
<dbReference type="Pfam" id="PF03331">
    <property type="entry name" value="LpxC"/>
    <property type="match status" value="1"/>
</dbReference>
<dbReference type="SUPFAM" id="SSF54211">
    <property type="entry name" value="Ribosomal protein S5 domain 2-like"/>
    <property type="match status" value="2"/>
</dbReference>
<protein>
    <recommendedName>
        <fullName evidence="1">UDP-3-O-acyl-N-acetylglucosamine deacetylase</fullName>
        <shortName evidence="1">UDP-3-O-acyl-GlcNAc deacetylase</shortName>
        <ecNumber evidence="1">3.5.1.108</ecNumber>
    </recommendedName>
    <alternativeName>
        <fullName evidence="1">UDP-3-O-[R-3-hydroxymyristoyl]-N-acetylglucosamine deacetylase</fullName>
    </alternativeName>
</protein>
<reference key="1">
    <citation type="submission" date="2006-12" db="EMBL/GenBank/DDBJ databases">
        <authorList>
            <person name="Fouts D.E."/>
            <person name="Nelson K.E."/>
            <person name="Sebastian Y."/>
        </authorList>
    </citation>
    <scope>NUCLEOTIDE SEQUENCE [LARGE SCALE GENOMIC DNA]</scope>
    <source>
        <strain>81-176</strain>
    </source>
</reference>
<sequence>MKQLTLAKTVKGVGIGLHKGEPIEITLEPLEANSGIVFFRSDLNASYKASPENVINTQMATVLGDDRGFISTIEHLMSAINAYGIDNVRIVLNANEAPVMDGSSISFCMMLDEAEVKELDAPKKIMVIKKPVEVRDGNKFVRLTPTKEPRINYTIKFDNAVIGEQSYNFEFSKKNYIENIARARTFGFLKDVQALRSMNLALGGSLENTIVVDENRILNPEGLRFKDEFVRHKILDAIGDLTLLGYRVFGDYISYAGSHHLNHLLTKEVLKDKDAYEIVSLEKTTQKAYEKVFA</sequence>
<feature type="chain" id="PRO_1000013203" description="UDP-3-O-acyl-N-acetylglucosamine deacetylase">
    <location>
        <begin position="1"/>
        <end position="294"/>
    </location>
</feature>
<feature type="active site" description="Proton donor" evidence="1">
    <location>
        <position position="259"/>
    </location>
</feature>
<feature type="binding site" evidence="1">
    <location>
        <position position="75"/>
    </location>
    <ligand>
        <name>Zn(2+)</name>
        <dbReference type="ChEBI" id="CHEBI:29105"/>
    </ligand>
</feature>
<feature type="binding site" evidence="1">
    <location>
        <position position="232"/>
    </location>
    <ligand>
        <name>Zn(2+)</name>
        <dbReference type="ChEBI" id="CHEBI:29105"/>
    </ligand>
</feature>
<feature type="binding site" evidence="1">
    <location>
        <position position="236"/>
    </location>
    <ligand>
        <name>Zn(2+)</name>
        <dbReference type="ChEBI" id="CHEBI:29105"/>
    </ligand>
</feature>
<keyword id="KW-0378">Hydrolase</keyword>
<keyword id="KW-0441">Lipid A biosynthesis</keyword>
<keyword id="KW-0444">Lipid biosynthesis</keyword>
<keyword id="KW-0443">Lipid metabolism</keyword>
<keyword id="KW-0479">Metal-binding</keyword>
<keyword id="KW-0862">Zinc</keyword>
<evidence type="ECO:0000255" key="1">
    <source>
        <dbReference type="HAMAP-Rule" id="MF_00388"/>
    </source>
</evidence>
<proteinExistence type="inferred from homology"/>